<evidence type="ECO:0000250" key="1">
    <source>
        <dbReference type="UniProtKB" id="P9WPE7"/>
    </source>
</evidence>
<evidence type="ECO:0000255" key="2">
    <source>
        <dbReference type="HAMAP-Rule" id="MF_00600"/>
    </source>
</evidence>
<keyword id="KW-0067">ATP-binding</keyword>
<keyword id="KW-0134">Cell wall</keyword>
<keyword id="KW-0143">Chaperone</keyword>
<keyword id="KW-0413">Isomerase</keyword>
<keyword id="KW-0547">Nucleotide-binding</keyword>
<keyword id="KW-0964">Secreted</keyword>
<protein>
    <recommendedName>
        <fullName evidence="2">Chaperonin GroEL 2</fullName>
        <ecNumber evidence="2">5.6.1.7</ecNumber>
    </recommendedName>
    <alternativeName>
        <fullName evidence="2">60 kDa chaperonin 2</fullName>
    </alternativeName>
    <alternativeName>
        <fullName evidence="2">Chaperonin-60 2</fullName>
        <shortName evidence="2">Cpn60 2</shortName>
    </alternativeName>
</protein>
<name>CH602_MYCSK</name>
<gene>
    <name evidence="2" type="primary">groEL2</name>
    <name evidence="2" type="synonym">groL2</name>
    <name type="ordered locus">Mkms_0620</name>
</gene>
<accession>A1UAH8</accession>
<organism>
    <name type="scientific">Mycobacterium sp. (strain KMS)</name>
    <dbReference type="NCBI Taxonomy" id="189918"/>
    <lineage>
        <taxon>Bacteria</taxon>
        <taxon>Bacillati</taxon>
        <taxon>Actinomycetota</taxon>
        <taxon>Actinomycetes</taxon>
        <taxon>Mycobacteriales</taxon>
        <taxon>Mycobacteriaceae</taxon>
        <taxon>Mycobacterium</taxon>
    </lineage>
</organism>
<sequence length="541" mass="56597">MAKTIAYDEEARRGLERGLNALADAVKVTLGPKGRNVVLEKKWGAPTITNDGVSIAKEIELEDPYEKIGAELVKEVAKKTDDVAGDGTTTATVLAQALVREGLRNVAAGANPLGLKRGIEKAVEKVTETLLKSAKEVETKEQIAATAGISAGDQSIGDLIAEAMDKVGNEGVITVEESNTFGLQLELTEGMRFDKGYISGYFVTDAERQEAVLEDPYILLVSSKISTVKDLLPLLEKVIQSGKPLLIIAEDVEGEALSTLVVNKIRGTFKSVAVKAPGFGDRRKAMLQDMAILTGGQVISEEVGLSLETADISLLGQARKVVITKDETTIVEGAGDAEAIQGRVAQIRAEIENSDSDYDREKLQERLAKLAGGVAVIKAGAATEVELKERKHRIEDAVRNAKAAVEEGIVAGGGVALLQAAPSLEELNLTGDEATGANIVRVALEAPLKQIAFNGGLEPGVVAEKVRNSAAGTGLNAATGEYEDLLAAGVADPVKVTRSALQNAASIAALFLTTEAVVADKPEKSAAPAGDPTGGMGGMDF</sequence>
<comment type="function">
    <text evidence="2">Together with its co-chaperonin GroES, plays an essential role in assisting protein folding. The GroEL-GroES system forms a nano-cage that allows encapsulation of the non-native substrate proteins and provides a physical environment optimized to promote and accelerate protein folding.</text>
</comment>
<comment type="catalytic activity">
    <reaction evidence="2">
        <text>ATP + H2O + a folded polypeptide = ADP + phosphate + an unfolded polypeptide.</text>
        <dbReference type="EC" id="5.6.1.7"/>
    </reaction>
</comment>
<comment type="subunit">
    <text evidence="2">Forms a cylinder of 14 subunits composed of two heptameric rings stacked back-to-back. Interacts with the co-chaperonin GroES.</text>
</comment>
<comment type="subcellular location">
    <subcellularLocation>
        <location evidence="1">Secreted</location>
        <location evidence="1">Capsule</location>
    </subcellularLocation>
    <subcellularLocation>
        <location evidence="1">Cell surface</location>
    </subcellularLocation>
    <subcellularLocation>
        <location evidence="1">Secreted</location>
        <location evidence="1">Cell wall</location>
    </subcellularLocation>
</comment>
<comment type="similarity">
    <text evidence="2">Belongs to the chaperonin (HSP60) family.</text>
</comment>
<feature type="chain" id="PRO_0000332022" description="Chaperonin GroEL 2">
    <location>
        <begin position="1"/>
        <end position="541"/>
    </location>
</feature>
<feature type="binding site" evidence="2">
    <location>
        <begin position="29"/>
        <end position="32"/>
    </location>
    <ligand>
        <name>ATP</name>
        <dbReference type="ChEBI" id="CHEBI:30616"/>
    </ligand>
</feature>
<feature type="binding site" evidence="2">
    <location>
        <begin position="86"/>
        <end position="90"/>
    </location>
    <ligand>
        <name>ATP</name>
        <dbReference type="ChEBI" id="CHEBI:30616"/>
    </ligand>
</feature>
<feature type="binding site" evidence="2">
    <location>
        <position position="413"/>
    </location>
    <ligand>
        <name>ATP</name>
        <dbReference type="ChEBI" id="CHEBI:30616"/>
    </ligand>
</feature>
<feature type="binding site" evidence="2">
    <location>
        <begin position="476"/>
        <end position="478"/>
    </location>
    <ligand>
        <name>ATP</name>
        <dbReference type="ChEBI" id="CHEBI:30616"/>
    </ligand>
</feature>
<feature type="binding site" evidence="2">
    <location>
        <position position="492"/>
    </location>
    <ligand>
        <name>ATP</name>
        <dbReference type="ChEBI" id="CHEBI:30616"/>
    </ligand>
</feature>
<reference key="1">
    <citation type="submission" date="2006-12" db="EMBL/GenBank/DDBJ databases">
        <title>Complete sequence of chromosome of Mycobacterium sp. KMS.</title>
        <authorList>
            <consortium name="US DOE Joint Genome Institute"/>
            <person name="Copeland A."/>
            <person name="Lucas S."/>
            <person name="Lapidus A."/>
            <person name="Barry K."/>
            <person name="Detter J.C."/>
            <person name="Glavina del Rio T."/>
            <person name="Hammon N."/>
            <person name="Israni S."/>
            <person name="Dalin E."/>
            <person name="Tice H."/>
            <person name="Pitluck S."/>
            <person name="Kiss H."/>
            <person name="Brettin T."/>
            <person name="Bruce D."/>
            <person name="Han C."/>
            <person name="Tapia R."/>
            <person name="Gilna P."/>
            <person name="Schmutz J."/>
            <person name="Larimer F."/>
            <person name="Land M."/>
            <person name="Hauser L."/>
            <person name="Kyrpides N."/>
            <person name="Mikhailova N."/>
            <person name="Miller C.D."/>
            <person name="Richardson P."/>
        </authorList>
    </citation>
    <scope>NUCLEOTIDE SEQUENCE [LARGE SCALE GENOMIC DNA]</scope>
    <source>
        <strain>KMS</strain>
    </source>
</reference>
<dbReference type="EC" id="5.6.1.7" evidence="2"/>
<dbReference type="EMBL" id="CP000518">
    <property type="protein sequence ID" value="ABL89836.1"/>
    <property type="molecule type" value="Genomic_DNA"/>
</dbReference>
<dbReference type="SMR" id="A1UAH8"/>
<dbReference type="STRING" id="189918.Mkms_0620"/>
<dbReference type="KEGG" id="mkm:Mkms_0620"/>
<dbReference type="HOGENOM" id="CLU_016503_3_0_11"/>
<dbReference type="OrthoDB" id="9766614at2"/>
<dbReference type="GO" id="GO:0042603">
    <property type="term" value="C:capsule"/>
    <property type="evidence" value="ECO:0007669"/>
    <property type="project" value="UniProtKB-SubCell"/>
</dbReference>
<dbReference type="GO" id="GO:0009986">
    <property type="term" value="C:cell surface"/>
    <property type="evidence" value="ECO:0007669"/>
    <property type="project" value="UniProtKB-SubCell"/>
</dbReference>
<dbReference type="GO" id="GO:0005737">
    <property type="term" value="C:cytoplasm"/>
    <property type="evidence" value="ECO:0007669"/>
    <property type="project" value="UniProtKB-UniRule"/>
</dbReference>
<dbReference type="GO" id="GO:0005576">
    <property type="term" value="C:extracellular region"/>
    <property type="evidence" value="ECO:0007669"/>
    <property type="project" value="UniProtKB-KW"/>
</dbReference>
<dbReference type="GO" id="GO:0005524">
    <property type="term" value="F:ATP binding"/>
    <property type="evidence" value="ECO:0007669"/>
    <property type="project" value="UniProtKB-UniRule"/>
</dbReference>
<dbReference type="GO" id="GO:0140662">
    <property type="term" value="F:ATP-dependent protein folding chaperone"/>
    <property type="evidence" value="ECO:0007669"/>
    <property type="project" value="InterPro"/>
</dbReference>
<dbReference type="GO" id="GO:0016853">
    <property type="term" value="F:isomerase activity"/>
    <property type="evidence" value="ECO:0007669"/>
    <property type="project" value="UniProtKB-KW"/>
</dbReference>
<dbReference type="GO" id="GO:0051082">
    <property type="term" value="F:unfolded protein binding"/>
    <property type="evidence" value="ECO:0007669"/>
    <property type="project" value="UniProtKB-UniRule"/>
</dbReference>
<dbReference type="GO" id="GO:0042026">
    <property type="term" value="P:protein refolding"/>
    <property type="evidence" value="ECO:0007669"/>
    <property type="project" value="UniProtKB-UniRule"/>
</dbReference>
<dbReference type="CDD" id="cd03344">
    <property type="entry name" value="GroEL"/>
    <property type="match status" value="1"/>
</dbReference>
<dbReference type="FunFam" id="3.50.7.10:FF:000001">
    <property type="entry name" value="60 kDa chaperonin"/>
    <property type="match status" value="1"/>
</dbReference>
<dbReference type="Gene3D" id="3.50.7.10">
    <property type="entry name" value="GroEL"/>
    <property type="match status" value="1"/>
</dbReference>
<dbReference type="Gene3D" id="1.10.560.10">
    <property type="entry name" value="GroEL-like equatorial domain"/>
    <property type="match status" value="1"/>
</dbReference>
<dbReference type="Gene3D" id="3.30.260.10">
    <property type="entry name" value="TCP-1-like chaperonin intermediate domain"/>
    <property type="match status" value="1"/>
</dbReference>
<dbReference type="HAMAP" id="MF_00600">
    <property type="entry name" value="CH60"/>
    <property type="match status" value="1"/>
</dbReference>
<dbReference type="InterPro" id="IPR018370">
    <property type="entry name" value="Chaperonin_Cpn60_CS"/>
</dbReference>
<dbReference type="InterPro" id="IPR001844">
    <property type="entry name" value="Cpn60/GroEL"/>
</dbReference>
<dbReference type="InterPro" id="IPR002423">
    <property type="entry name" value="Cpn60/GroEL/TCP-1"/>
</dbReference>
<dbReference type="InterPro" id="IPR027409">
    <property type="entry name" value="GroEL-like_apical_dom_sf"/>
</dbReference>
<dbReference type="InterPro" id="IPR027413">
    <property type="entry name" value="GROEL-like_equatorial_sf"/>
</dbReference>
<dbReference type="InterPro" id="IPR027410">
    <property type="entry name" value="TCP-1-like_intermed_sf"/>
</dbReference>
<dbReference type="NCBIfam" id="TIGR02348">
    <property type="entry name" value="GroEL"/>
    <property type="match status" value="1"/>
</dbReference>
<dbReference type="NCBIfam" id="NF000592">
    <property type="entry name" value="PRK00013.1"/>
    <property type="match status" value="1"/>
</dbReference>
<dbReference type="NCBIfam" id="NF009487">
    <property type="entry name" value="PRK12849.1"/>
    <property type="match status" value="1"/>
</dbReference>
<dbReference type="NCBIfam" id="NF009488">
    <property type="entry name" value="PRK12850.1"/>
    <property type="match status" value="1"/>
</dbReference>
<dbReference type="NCBIfam" id="NF009489">
    <property type="entry name" value="PRK12851.1"/>
    <property type="match status" value="1"/>
</dbReference>
<dbReference type="PANTHER" id="PTHR45633">
    <property type="entry name" value="60 KDA HEAT SHOCK PROTEIN, MITOCHONDRIAL"/>
    <property type="match status" value="1"/>
</dbReference>
<dbReference type="Pfam" id="PF00118">
    <property type="entry name" value="Cpn60_TCP1"/>
    <property type="match status" value="1"/>
</dbReference>
<dbReference type="PRINTS" id="PR00298">
    <property type="entry name" value="CHAPERONIN60"/>
</dbReference>
<dbReference type="SUPFAM" id="SSF52029">
    <property type="entry name" value="GroEL apical domain-like"/>
    <property type="match status" value="1"/>
</dbReference>
<dbReference type="SUPFAM" id="SSF48592">
    <property type="entry name" value="GroEL equatorial domain-like"/>
    <property type="match status" value="1"/>
</dbReference>
<dbReference type="SUPFAM" id="SSF54849">
    <property type="entry name" value="GroEL-intermediate domain like"/>
    <property type="match status" value="1"/>
</dbReference>
<dbReference type="PROSITE" id="PS00296">
    <property type="entry name" value="CHAPERONINS_CPN60"/>
    <property type="match status" value="1"/>
</dbReference>
<proteinExistence type="inferred from homology"/>